<keyword id="KW-0175">Coiled coil</keyword>
<keyword id="KW-0472">Membrane</keyword>
<keyword id="KW-1185">Reference proteome</keyword>
<keyword id="KW-0812">Transmembrane</keyword>
<keyword id="KW-1133">Transmembrane helix</keyword>
<comment type="subcellular location">
    <subcellularLocation>
        <location evidence="3">Membrane</location>
        <topology evidence="3">Multi-pass membrane protein</topology>
    </subcellularLocation>
</comment>
<comment type="similarity">
    <text evidence="3">Belongs to the UPF0496 family.</text>
</comment>
<comment type="sequence caution" evidence="3">
    <conflict type="erroneous initiation">
        <sequence resource="EMBL-CDS" id="AAD08932"/>
    </conflict>
    <text>Truncated N-terminus.</text>
</comment>
<comment type="sequence caution" evidence="3">
    <conflict type="erroneous initiation">
        <sequence resource="EMBL-CDS" id="AAM15135"/>
    </conflict>
    <text>Truncated N-terminus.</text>
</comment>
<reference key="1">
    <citation type="journal article" date="1999" name="Nature">
        <title>Sequence and analysis of chromosome 2 of the plant Arabidopsis thaliana.</title>
        <authorList>
            <person name="Lin X."/>
            <person name="Kaul S."/>
            <person name="Rounsley S.D."/>
            <person name="Shea T.P."/>
            <person name="Benito M.-I."/>
            <person name="Town C.D."/>
            <person name="Fujii C.Y."/>
            <person name="Mason T.M."/>
            <person name="Bowman C.L."/>
            <person name="Barnstead M.E."/>
            <person name="Feldblyum T.V."/>
            <person name="Buell C.R."/>
            <person name="Ketchum K.A."/>
            <person name="Lee J.J."/>
            <person name="Ronning C.M."/>
            <person name="Koo H.L."/>
            <person name="Moffat K.S."/>
            <person name="Cronin L.A."/>
            <person name="Shen M."/>
            <person name="Pai G."/>
            <person name="Van Aken S."/>
            <person name="Umayam L."/>
            <person name="Tallon L.J."/>
            <person name="Gill J.E."/>
            <person name="Adams M.D."/>
            <person name="Carrera A.J."/>
            <person name="Creasy T.H."/>
            <person name="Goodman H.M."/>
            <person name="Somerville C.R."/>
            <person name="Copenhaver G.P."/>
            <person name="Preuss D."/>
            <person name="Nierman W.C."/>
            <person name="White O."/>
            <person name="Eisen J.A."/>
            <person name="Salzberg S.L."/>
            <person name="Fraser C.M."/>
            <person name="Venter J.C."/>
        </authorList>
    </citation>
    <scope>NUCLEOTIDE SEQUENCE [LARGE SCALE GENOMIC DNA]</scope>
    <source>
        <strain>cv. Columbia</strain>
    </source>
</reference>
<reference key="2">
    <citation type="journal article" date="2017" name="Plant J.">
        <title>Araport11: a complete reannotation of the Arabidopsis thaliana reference genome.</title>
        <authorList>
            <person name="Cheng C.Y."/>
            <person name="Krishnakumar V."/>
            <person name="Chan A.P."/>
            <person name="Thibaud-Nissen F."/>
            <person name="Schobel S."/>
            <person name="Town C.D."/>
        </authorList>
    </citation>
    <scope>GENOME REANNOTATION</scope>
    <source>
        <strain>cv. Columbia</strain>
    </source>
</reference>
<reference key="3">
    <citation type="submission" date="2005-03" db="EMBL/GenBank/DDBJ databases">
        <title>Large-scale analysis of RIKEN Arabidopsis full-length (RAFL) cDNAs.</title>
        <authorList>
            <person name="Totoki Y."/>
            <person name="Seki M."/>
            <person name="Ishida J."/>
            <person name="Nakajima M."/>
            <person name="Enju A."/>
            <person name="Kamiya A."/>
            <person name="Narusaka M."/>
            <person name="Shin-i T."/>
            <person name="Nakagawa M."/>
            <person name="Sakamoto N."/>
            <person name="Oishi K."/>
            <person name="Kohara Y."/>
            <person name="Kobayashi M."/>
            <person name="Toyoda A."/>
            <person name="Sakaki Y."/>
            <person name="Sakurai T."/>
            <person name="Iida K."/>
            <person name="Akiyama K."/>
            <person name="Satou M."/>
            <person name="Toyoda T."/>
            <person name="Konagaya A."/>
            <person name="Carninci P."/>
            <person name="Kawai J."/>
            <person name="Hayashizaki Y."/>
            <person name="Shinozaki K."/>
        </authorList>
    </citation>
    <scope>NUCLEOTIDE SEQUENCE [LARGE SCALE MRNA]</scope>
    <source>
        <strain>cv. Columbia</strain>
    </source>
</reference>
<organism>
    <name type="scientific">Arabidopsis thaliana</name>
    <name type="common">Mouse-ear cress</name>
    <dbReference type="NCBI Taxonomy" id="3702"/>
    <lineage>
        <taxon>Eukaryota</taxon>
        <taxon>Viridiplantae</taxon>
        <taxon>Streptophyta</taxon>
        <taxon>Embryophyta</taxon>
        <taxon>Tracheophyta</taxon>
        <taxon>Spermatophyta</taxon>
        <taxon>Magnoliopsida</taxon>
        <taxon>eudicotyledons</taxon>
        <taxon>Gunneridae</taxon>
        <taxon>Pentapetalae</taxon>
        <taxon>rosids</taxon>
        <taxon>malvids</taxon>
        <taxon>Brassicales</taxon>
        <taxon>Brassicaceae</taxon>
        <taxon>Camelineae</taxon>
        <taxon>Arabidopsis</taxon>
    </lineage>
</organism>
<name>U496I_ARATH</name>
<gene>
    <name type="ordered locus">At2g18630</name>
    <name type="ORF">F24H14.1</name>
    <name type="ORF">MSF3.1</name>
</gene>
<protein>
    <recommendedName>
        <fullName>UPF0496 protein At2g18630</fullName>
    </recommendedName>
</protein>
<accession>Q56XQ0</accession>
<accession>Q9ZNR3</accession>
<proteinExistence type="evidence at transcript level"/>
<evidence type="ECO:0000255" key="1"/>
<evidence type="ECO:0000256" key="2">
    <source>
        <dbReference type="SAM" id="MobiDB-lite"/>
    </source>
</evidence>
<evidence type="ECO:0000305" key="3"/>
<dbReference type="EMBL" id="AC005724">
    <property type="protein sequence ID" value="AAD08932.1"/>
    <property type="status" value="ALT_INIT"/>
    <property type="molecule type" value="Genomic_DNA"/>
</dbReference>
<dbReference type="EMBL" id="AC006135">
    <property type="protein sequence ID" value="AAM15135.1"/>
    <property type="status" value="ALT_INIT"/>
    <property type="molecule type" value="Genomic_DNA"/>
</dbReference>
<dbReference type="EMBL" id="CP002685">
    <property type="protein sequence ID" value="AEC06787.1"/>
    <property type="molecule type" value="Genomic_DNA"/>
</dbReference>
<dbReference type="EMBL" id="AK221623">
    <property type="protein sequence ID" value="BAD95236.1"/>
    <property type="molecule type" value="mRNA"/>
</dbReference>
<dbReference type="PIR" id="F84566">
    <property type="entry name" value="F84566"/>
</dbReference>
<dbReference type="RefSeq" id="NP_179453.2">
    <property type="nucleotide sequence ID" value="NM_127419.4"/>
</dbReference>
<dbReference type="SMR" id="Q56XQ0"/>
<dbReference type="FunCoup" id="Q56XQ0">
    <property type="interactions" value="228"/>
</dbReference>
<dbReference type="iPTMnet" id="Q56XQ0"/>
<dbReference type="PaxDb" id="3702-AT2G18630.1"/>
<dbReference type="ProteomicsDB" id="243203"/>
<dbReference type="EnsemblPlants" id="AT2G18630.1">
    <property type="protein sequence ID" value="AT2G18630.1"/>
    <property type="gene ID" value="AT2G18630"/>
</dbReference>
<dbReference type="GeneID" id="816378"/>
<dbReference type="Gramene" id="AT2G18630.1">
    <property type="protein sequence ID" value="AT2G18630.1"/>
    <property type="gene ID" value="AT2G18630"/>
</dbReference>
<dbReference type="KEGG" id="ath:AT2G18630"/>
<dbReference type="Araport" id="AT2G18630"/>
<dbReference type="TAIR" id="AT2G18630"/>
<dbReference type="eggNOG" id="ENOG502QVAQ">
    <property type="taxonomic scope" value="Eukaryota"/>
</dbReference>
<dbReference type="HOGENOM" id="CLU_044778_0_0_1"/>
<dbReference type="InParanoid" id="Q56XQ0"/>
<dbReference type="OrthoDB" id="679959at2759"/>
<dbReference type="PRO" id="PR:Q56XQ0"/>
<dbReference type="Proteomes" id="UP000006548">
    <property type="component" value="Chromosome 2"/>
</dbReference>
<dbReference type="ExpressionAtlas" id="Q56XQ0">
    <property type="expression patterns" value="baseline and differential"/>
</dbReference>
<dbReference type="GO" id="GO:0016020">
    <property type="term" value="C:membrane"/>
    <property type="evidence" value="ECO:0007669"/>
    <property type="project" value="UniProtKB-SubCell"/>
</dbReference>
<dbReference type="GO" id="GO:0005777">
    <property type="term" value="C:peroxisome"/>
    <property type="evidence" value="ECO:0000314"/>
    <property type="project" value="TAIR"/>
</dbReference>
<dbReference type="InterPro" id="IPR007749">
    <property type="entry name" value="DUF677"/>
</dbReference>
<dbReference type="PANTHER" id="PTHR31113:SF32">
    <property type="entry name" value="UPF0496 PLANT-LIKE PROTEIN"/>
    <property type="match status" value="1"/>
</dbReference>
<dbReference type="PANTHER" id="PTHR31113">
    <property type="entry name" value="UPF0496 PROTEIN 3-RELATED"/>
    <property type="match status" value="1"/>
</dbReference>
<dbReference type="Pfam" id="PF05055">
    <property type="entry name" value="DUF677"/>
    <property type="match status" value="1"/>
</dbReference>
<feature type="chain" id="PRO_0000306894" description="UPF0496 protein At2g18630">
    <location>
        <begin position="1"/>
        <end position="393"/>
    </location>
</feature>
<feature type="transmembrane region" description="Helical" evidence="1">
    <location>
        <begin position="226"/>
        <end position="246"/>
    </location>
</feature>
<feature type="transmembrane region" description="Helical" evidence="1">
    <location>
        <begin position="249"/>
        <end position="269"/>
    </location>
</feature>
<feature type="region of interest" description="Disordered" evidence="2">
    <location>
        <begin position="1"/>
        <end position="20"/>
    </location>
</feature>
<feature type="coiled-coil region" evidence="1">
    <location>
        <begin position="149"/>
        <end position="222"/>
    </location>
</feature>
<feature type="coiled-coil region" evidence="1">
    <location>
        <begin position="299"/>
        <end position="356"/>
    </location>
</feature>
<sequence length="393" mass="45006">MMGGKSSKSKKNVEFGSPSTPVQIKINSEYTEHLSSYERACSEDPKLESFDSALHERTNRVINKLASGVEIKSLSFDSLREVTQCLLDMNQDVVKVILQDKEDIWNNQDLFSLVNLYFESTAKTMDFCSELENCLNRARRSQVIIQFAVNQFEEENEDKENRKYEKTLEELKRFKVAGEPFTKEFFALFDLVYKQQVMMLEELHKLKRKLDKRLRNIKTWRRVSNMVFVTAFVSVLIFSVVAAAVAAPPVVAAIAGALAVPVGSVGKWCNTLWTKYEKVVRGQKEIITSIRIGTYISVKEMDNISILVRKVEVEIESLLKKAEFAITEEKEVRLAIDEIKKKLDVFTETIEELGEHAGKYCSDVTKARTVILQRIIRYPAGSPKDEAPWTEMM</sequence>